<reference key="1">
    <citation type="journal article" date="2002" name="Proc. Natl. Acad. Sci. U.S.A.">
        <title>The complete genome sequence of Chlorobium tepidum TLS, a photosynthetic, anaerobic, green-sulfur bacterium.</title>
        <authorList>
            <person name="Eisen J.A."/>
            <person name="Nelson K.E."/>
            <person name="Paulsen I.T."/>
            <person name="Heidelberg J.F."/>
            <person name="Wu M."/>
            <person name="Dodson R.J."/>
            <person name="DeBoy R.T."/>
            <person name="Gwinn M.L."/>
            <person name="Nelson W.C."/>
            <person name="Haft D.H."/>
            <person name="Hickey E.K."/>
            <person name="Peterson J.D."/>
            <person name="Durkin A.S."/>
            <person name="Kolonay J.F."/>
            <person name="Yang F."/>
            <person name="Holt I.E."/>
            <person name="Umayam L.A."/>
            <person name="Mason T.M."/>
            <person name="Brenner M."/>
            <person name="Shea T.P."/>
            <person name="Parksey D.S."/>
            <person name="Nierman W.C."/>
            <person name="Feldblyum T.V."/>
            <person name="Hansen C.L."/>
            <person name="Craven M.B."/>
            <person name="Radune D."/>
            <person name="Vamathevan J.J."/>
            <person name="Khouri H.M."/>
            <person name="White O."/>
            <person name="Gruber T.M."/>
            <person name="Ketchum K.A."/>
            <person name="Venter J.C."/>
            <person name="Tettelin H."/>
            <person name="Bryant D.A."/>
            <person name="Fraser C.M."/>
        </authorList>
    </citation>
    <scope>NUCLEOTIDE SEQUENCE [LARGE SCALE GENOMIC DNA]</scope>
    <source>
        <strain>ATCC 49652 / DSM 12025 / NBRC 103806 / TLS</strain>
    </source>
</reference>
<comment type="function">
    <text evidence="1">Acts as a chaperone.</text>
</comment>
<comment type="induction">
    <text evidence="1">By stress conditions e.g. heat shock.</text>
</comment>
<comment type="similarity">
    <text evidence="1">Belongs to the heat shock protein 70 family.</text>
</comment>
<keyword id="KW-0067">ATP-binding</keyword>
<keyword id="KW-0143">Chaperone</keyword>
<keyword id="KW-0547">Nucleotide-binding</keyword>
<keyword id="KW-0597">Phosphoprotein</keyword>
<keyword id="KW-1185">Reference proteome</keyword>
<keyword id="KW-0346">Stress response</keyword>
<organism>
    <name type="scientific">Chlorobaculum tepidum (strain ATCC 49652 / DSM 12025 / NBRC 103806 / TLS)</name>
    <name type="common">Chlorobium tepidum</name>
    <dbReference type="NCBI Taxonomy" id="194439"/>
    <lineage>
        <taxon>Bacteria</taxon>
        <taxon>Pseudomonadati</taxon>
        <taxon>Chlorobiota</taxon>
        <taxon>Chlorobiia</taxon>
        <taxon>Chlorobiales</taxon>
        <taxon>Chlorobiaceae</taxon>
        <taxon>Chlorobaculum</taxon>
    </lineage>
</organism>
<feature type="chain" id="PRO_0000078445" description="Chaperone protein DnaK">
    <location>
        <begin position="1"/>
        <end position="633"/>
    </location>
</feature>
<feature type="region of interest" description="Disordered" evidence="2">
    <location>
        <begin position="594"/>
        <end position="633"/>
    </location>
</feature>
<feature type="compositionally biased region" description="Gly residues" evidence="2">
    <location>
        <begin position="610"/>
        <end position="619"/>
    </location>
</feature>
<feature type="modified residue" description="Phosphothreonine; by autocatalysis" evidence="1">
    <location>
        <position position="196"/>
    </location>
</feature>
<proteinExistence type="inferred from homology"/>
<protein>
    <recommendedName>
        <fullName evidence="1">Chaperone protein DnaK</fullName>
    </recommendedName>
    <alternativeName>
        <fullName evidence="1">HSP70</fullName>
    </alternativeName>
    <alternativeName>
        <fullName evidence="1">Heat shock 70 kDa protein</fullName>
    </alternativeName>
    <alternativeName>
        <fullName evidence="1">Heat shock protein 70</fullName>
    </alternativeName>
</protein>
<name>DNAK_CHLTE</name>
<gene>
    <name evidence="1" type="primary">dnaK</name>
    <name type="ordered locus">CT0643</name>
</gene>
<sequence>MGKIIGIDLGTTNSCVAVMQGTQPTVIENSEGSRTTPSMVAFTKTGERLVGQAAKRQAVTNPKNTIFSIKRFMGRKYDEVPNEKKLASYDVVNEGGYAKVKIGDKTYSPQEISAMILQKMKQTAEDFLGEKVTEAVITVPAYFNDAQRQATKDAGKIAGLEVKRIINEPTAAALAYGLDKKKENEKVAVFDLGGGTFDISILELGGGVFEVKSTDGDTHLGGDDFDQVIINYLADEFKKQEGIDLRKDAIALQRLKEAAEKAKIELSSRTDTEINLPFITATQEGPKHLVINLTRAKFEAMSAALFDKLFEPCRRAIKNSKFDIKEIDEVVLVGGSTRIPKVQALVKEFFGKEPNKSVNPDEVVAIGAAIQGGVLQGDVTDVLLLDVTPLSLGIETLGGVMTKLIEANTTIPTRKQEIFSTAADNQTSVEVHVLQGERPMASDNKTLGRFHLSDIPPAPRGVPQIEVTFDIDANGILNVSAKDKATGKEQSIKIEASGKLTEAEIEKMKEDAKAHAAEDQKRKEEIELKNSADSLIFSTEKQLTELGDKLPADKKAAIESALEKLKEAHKSGRVDAIKPAMDELSKVWSDAASNLYGQPGAEPQPETNGHAGGSKGGDGAVNAEYEVIDGDDK</sequence>
<accession>Q8KEP3</accession>
<evidence type="ECO:0000255" key="1">
    <source>
        <dbReference type="HAMAP-Rule" id="MF_00332"/>
    </source>
</evidence>
<evidence type="ECO:0000256" key="2">
    <source>
        <dbReference type="SAM" id="MobiDB-lite"/>
    </source>
</evidence>
<dbReference type="EMBL" id="AE006470">
    <property type="protein sequence ID" value="AAM71882.1"/>
    <property type="molecule type" value="Genomic_DNA"/>
</dbReference>
<dbReference type="RefSeq" id="NP_661540.1">
    <property type="nucleotide sequence ID" value="NC_002932.3"/>
</dbReference>
<dbReference type="RefSeq" id="WP_010932327.1">
    <property type="nucleotide sequence ID" value="NC_002932.3"/>
</dbReference>
<dbReference type="SMR" id="Q8KEP3"/>
<dbReference type="STRING" id="194439.CT0643"/>
<dbReference type="EnsemblBacteria" id="AAM71882">
    <property type="protein sequence ID" value="AAM71882"/>
    <property type="gene ID" value="CT0643"/>
</dbReference>
<dbReference type="KEGG" id="cte:CT0643"/>
<dbReference type="PATRIC" id="fig|194439.7.peg.599"/>
<dbReference type="eggNOG" id="COG0443">
    <property type="taxonomic scope" value="Bacteria"/>
</dbReference>
<dbReference type="HOGENOM" id="CLU_005965_2_1_10"/>
<dbReference type="OrthoDB" id="9766019at2"/>
<dbReference type="Proteomes" id="UP000001007">
    <property type="component" value="Chromosome"/>
</dbReference>
<dbReference type="GO" id="GO:0005524">
    <property type="term" value="F:ATP binding"/>
    <property type="evidence" value="ECO:0007669"/>
    <property type="project" value="UniProtKB-UniRule"/>
</dbReference>
<dbReference type="GO" id="GO:0140662">
    <property type="term" value="F:ATP-dependent protein folding chaperone"/>
    <property type="evidence" value="ECO:0007669"/>
    <property type="project" value="InterPro"/>
</dbReference>
<dbReference type="GO" id="GO:0051082">
    <property type="term" value="F:unfolded protein binding"/>
    <property type="evidence" value="ECO:0007669"/>
    <property type="project" value="InterPro"/>
</dbReference>
<dbReference type="CDD" id="cd10234">
    <property type="entry name" value="ASKHA_NBD_HSP70_DnaK-like"/>
    <property type="match status" value="1"/>
</dbReference>
<dbReference type="FunFam" id="2.60.34.10:FF:000014">
    <property type="entry name" value="Chaperone protein DnaK HSP70"/>
    <property type="match status" value="1"/>
</dbReference>
<dbReference type="FunFam" id="1.20.1270.10:FF:000001">
    <property type="entry name" value="Molecular chaperone DnaK"/>
    <property type="match status" value="1"/>
</dbReference>
<dbReference type="FunFam" id="3.30.420.40:FF:000004">
    <property type="entry name" value="Molecular chaperone DnaK"/>
    <property type="match status" value="1"/>
</dbReference>
<dbReference type="FunFam" id="3.90.640.10:FF:000003">
    <property type="entry name" value="Molecular chaperone DnaK"/>
    <property type="match status" value="1"/>
</dbReference>
<dbReference type="Gene3D" id="1.20.1270.10">
    <property type="match status" value="1"/>
</dbReference>
<dbReference type="Gene3D" id="3.30.420.40">
    <property type="match status" value="2"/>
</dbReference>
<dbReference type="Gene3D" id="3.90.640.10">
    <property type="entry name" value="Actin, Chain A, domain 4"/>
    <property type="match status" value="1"/>
</dbReference>
<dbReference type="Gene3D" id="2.60.34.10">
    <property type="entry name" value="Substrate Binding Domain Of DNAk, Chain A, domain 1"/>
    <property type="match status" value="1"/>
</dbReference>
<dbReference type="HAMAP" id="MF_00332">
    <property type="entry name" value="DnaK"/>
    <property type="match status" value="1"/>
</dbReference>
<dbReference type="InterPro" id="IPR043129">
    <property type="entry name" value="ATPase_NBD"/>
</dbReference>
<dbReference type="InterPro" id="IPR012725">
    <property type="entry name" value="Chaperone_DnaK"/>
</dbReference>
<dbReference type="InterPro" id="IPR018181">
    <property type="entry name" value="Heat_shock_70_CS"/>
</dbReference>
<dbReference type="InterPro" id="IPR029048">
    <property type="entry name" value="HSP70_C_sf"/>
</dbReference>
<dbReference type="InterPro" id="IPR029047">
    <property type="entry name" value="HSP70_peptide-bd_sf"/>
</dbReference>
<dbReference type="InterPro" id="IPR013126">
    <property type="entry name" value="Hsp_70_fam"/>
</dbReference>
<dbReference type="NCBIfam" id="NF001413">
    <property type="entry name" value="PRK00290.1"/>
    <property type="match status" value="1"/>
</dbReference>
<dbReference type="NCBIfam" id="NF003520">
    <property type="entry name" value="PRK05183.1"/>
    <property type="match status" value="1"/>
</dbReference>
<dbReference type="NCBIfam" id="TIGR02350">
    <property type="entry name" value="prok_dnaK"/>
    <property type="match status" value="1"/>
</dbReference>
<dbReference type="PANTHER" id="PTHR19375">
    <property type="entry name" value="HEAT SHOCK PROTEIN 70KDA"/>
    <property type="match status" value="1"/>
</dbReference>
<dbReference type="Pfam" id="PF00012">
    <property type="entry name" value="HSP70"/>
    <property type="match status" value="1"/>
</dbReference>
<dbReference type="PRINTS" id="PR00301">
    <property type="entry name" value="HEATSHOCK70"/>
</dbReference>
<dbReference type="SUPFAM" id="SSF53067">
    <property type="entry name" value="Actin-like ATPase domain"/>
    <property type="match status" value="2"/>
</dbReference>
<dbReference type="SUPFAM" id="SSF100934">
    <property type="entry name" value="Heat shock protein 70kD (HSP70), C-terminal subdomain"/>
    <property type="match status" value="1"/>
</dbReference>
<dbReference type="SUPFAM" id="SSF100920">
    <property type="entry name" value="Heat shock protein 70kD (HSP70), peptide-binding domain"/>
    <property type="match status" value="1"/>
</dbReference>
<dbReference type="PROSITE" id="PS00297">
    <property type="entry name" value="HSP70_1"/>
    <property type="match status" value="1"/>
</dbReference>
<dbReference type="PROSITE" id="PS00329">
    <property type="entry name" value="HSP70_2"/>
    <property type="match status" value="1"/>
</dbReference>
<dbReference type="PROSITE" id="PS01036">
    <property type="entry name" value="HSP70_3"/>
    <property type="match status" value="1"/>
</dbReference>